<gene>
    <name evidence="1" type="primary">rpsQ</name>
    <name type="ordered locus">NMB0151</name>
</gene>
<keyword id="KW-1185">Reference proteome</keyword>
<keyword id="KW-0687">Ribonucleoprotein</keyword>
<keyword id="KW-0689">Ribosomal protein</keyword>
<keyword id="KW-0694">RNA-binding</keyword>
<keyword id="KW-0699">rRNA-binding</keyword>
<dbReference type="EMBL" id="AE002098">
    <property type="protein sequence ID" value="AAF40609.1"/>
    <property type="molecule type" value="Genomic_DNA"/>
</dbReference>
<dbReference type="RefSeq" id="NP_273209.1">
    <property type="nucleotide sequence ID" value="NC_003112.2"/>
</dbReference>
<dbReference type="RefSeq" id="WP_002215433.1">
    <property type="nucleotide sequence ID" value="NC_003112.2"/>
</dbReference>
<dbReference type="SMR" id="Q7DDT3"/>
<dbReference type="FunCoup" id="Q7DDT3">
    <property type="interactions" value="415"/>
</dbReference>
<dbReference type="STRING" id="122586.NMB0151"/>
<dbReference type="PaxDb" id="122586-NMB0151"/>
<dbReference type="GeneID" id="93387226"/>
<dbReference type="KEGG" id="nme:NMB0151"/>
<dbReference type="PATRIC" id="fig|122586.8.peg.192"/>
<dbReference type="HOGENOM" id="CLU_073626_1_1_4"/>
<dbReference type="InParanoid" id="Q7DDT3"/>
<dbReference type="OrthoDB" id="9811714at2"/>
<dbReference type="Proteomes" id="UP000000425">
    <property type="component" value="Chromosome"/>
</dbReference>
<dbReference type="GO" id="GO:0022627">
    <property type="term" value="C:cytosolic small ribosomal subunit"/>
    <property type="evidence" value="ECO:0000318"/>
    <property type="project" value="GO_Central"/>
</dbReference>
<dbReference type="GO" id="GO:0019843">
    <property type="term" value="F:rRNA binding"/>
    <property type="evidence" value="ECO:0007669"/>
    <property type="project" value="UniProtKB-UniRule"/>
</dbReference>
<dbReference type="GO" id="GO:0003735">
    <property type="term" value="F:structural constituent of ribosome"/>
    <property type="evidence" value="ECO:0000318"/>
    <property type="project" value="GO_Central"/>
</dbReference>
<dbReference type="GO" id="GO:0006412">
    <property type="term" value="P:translation"/>
    <property type="evidence" value="ECO:0007669"/>
    <property type="project" value="UniProtKB-UniRule"/>
</dbReference>
<dbReference type="CDD" id="cd00364">
    <property type="entry name" value="Ribosomal_uS17"/>
    <property type="match status" value="1"/>
</dbReference>
<dbReference type="FunFam" id="2.40.50.140:FF:000014">
    <property type="entry name" value="30S ribosomal protein S17"/>
    <property type="match status" value="1"/>
</dbReference>
<dbReference type="Gene3D" id="2.40.50.140">
    <property type="entry name" value="Nucleic acid-binding proteins"/>
    <property type="match status" value="1"/>
</dbReference>
<dbReference type="HAMAP" id="MF_01345_B">
    <property type="entry name" value="Ribosomal_uS17_B"/>
    <property type="match status" value="1"/>
</dbReference>
<dbReference type="InterPro" id="IPR012340">
    <property type="entry name" value="NA-bd_OB-fold"/>
</dbReference>
<dbReference type="InterPro" id="IPR000266">
    <property type="entry name" value="Ribosomal_uS17"/>
</dbReference>
<dbReference type="InterPro" id="IPR019984">
    <property type="entry name" value="Ribosomal_uS17_bact/chlr"/>
</dbReference>
<dbReference type="InterPro" id="IPR019979">
    <property type="entry name" value="Ribosomal_uS17_CS"/>
</dbReference>
<dbReference type="NCBIfam" id="NF004123">
    <property type="entry name" value="PRK05610.1"/>
    <property type="match status" value="1"/>
</dbReference>
<dbReference type="NCBIfam" id="TIGR03635">
    <property type="entry name" value="uS17_bact"/>
    <property type="match status" value="1"/>
</dbReference>
<dbReference type="PANTHER" id="PTHR10744">
    <property type="entry name" value="40S RIBOSOMAL PROTEIN S11 FAMILY MEMBER"/>
    <property type="match status" value="1"/>
</dbReference>
<dbReference type="PANTHER" id="PTHR10744:SF1">
    <property type="entry name" value="SMALL RIBOSOMAL SUBUNIT PROTEIN US17M"/>
    <property type="match status" value="1"/>
</dbReference>
<dbReference type="Pfam" id="PF00366">
    <property type="entry name" value="Ribosomal_S17"/>
    <property type="match status" value="1"/>
</dbReference>
<dbReference type="PRINTS" id="PR00973">
    <property type="entry name" value="RIBOSOMALS17"/>
</dbReference>
<dbReference type="SUPFAM" id="SSF50249">
    <property type="entry name" value="Nucleic acid-binding proteins"/>
    <property type="match status" value="1"/>
</dbReference>
<dbReference type="PROSITE" id="PS00056">
    <property type="entry name" value="RIBOSOMAL_S17"/>
    <property type="match status" value="1"/>
</dbReference>
<comment type="function">
    <text evidence="1">One of the primary rRNA binding proteins, it binds specifically to the 5'-end of 16S ribosomal RNA.</text>
</comment>
<comment type="subunit">
    <text evidence="1">Part of the 30S ribosomal subunit.</text>
</comment>
<comment type="similarity">
    <text evidence="1">Belongs to the universal ribosomal protein uS17 family.</text>
</comment>
<feature type="chain" id="PRO_0000233518" description="Small ribosomal subunit protein uS17">
    <location>
        <begin position="1"/>
        <end position="87"/>
    </location>
</feature>
<sequence>MSETKNVRTLQGKVVSDKMDKTVTVLVERKVKHPLYGKIIRLSTKIHAHDENNQYGIGDVVVISESRPLSKTKSWVVSELVEKARSI</sequence>
<evidence type="ECO:0000255" key="1">
    <source>
        <dbReference type="HAMAP-Rule" id="MF_01345"/>
    </source>
</evidence>
<evidence type="ECO:0000305" key="2"/>
<protein>
    <recommendedName>
        <fullName evidence="1">Small ribosomal subunit protein uS17</fullName>
    </recommendedName>
    <alternativeName>
        <fullName evidence="2">30S ribosomal protein S17</fullName>
    </alternativeName>
</protein>
<organism>
    <name type="scientific">Neisseria meningitidis serogroup B (strain ATCC BAA-335 / MC58)</name>
    <dbReference type="NCBI Taxonomy" id="122586"/>
    <lineage>
        <taxon>Bacteria</taxon>
        <taxon>Pseudomonadati</taxon>
        <taxon>Pseudomonadota</taxon>
        <taxon>Betaproteobacteria</taxon>
        <taxon>Neisseriales</taxon>
        <taxon>Neisseriaceae</taxon>
        <taxon>Neisseria</taxon>
    </lineage>
</organism>
<reference key="1">
    <citation type="journal article" date="2000" name="Science">
        <title>Complete genome sequence of Neisseria meningitidis serogroup B strain MC58.</title>
        <authorList>
            <person name="Tettelin H."/>
            <person name="Saunders N.J."/>
            <person name="Heidelberg J.F."/>
            <person name="Jeffries A.C."/>
            <person name="Nelson K.E."/>
            <person name="Eisen J.A."/>
            <person name="Ketchum K.A."/>
            <person name="Hood D.W."/>
            <person name="Peden J.F."/>
            <person name="Dodson R.J."/>
            <person name="Nelson W.C."/>
            <person name="Gwinn M.L."/>
            <person name="DeBoy R.T."/>
            <person name="Peterson J.D."/>
            <person name="Hickey E.K."/>
            <person name="Haft D.H."/>
            <person name="Salzberg S.L."/>
            <person name="White O."/>
            <person name="Fleischmann R.D."/>
            <person name="Dougherty B.A."/>
            <person name="Mason T.M."/>
            <person name="Ciecko A."/>
            <person name="Parksey D.S."/>
            <person name="Blair E."/>
            <person name="Cittone H."/>
            <person name="Clark E.B."/>
            <person name="Cotton M.D."/>
            <person name="Utterback T.R."/>
            <person name="Khouri H.M."/>
            <person name="Qin H."/>
            <person name="Vamathevan J.J."/>
            <person name="Gill J."/>
            <person name="Scarlato V."/>
            <person name="Masignani V."/>
            <person name="Pizza M."/>
            <person name="Grandi G."/>
            <person name="Sun L."/>
            <person name="Smith H.O."/>
            <person name="Fraser C.M."/>
            <person name="Moxon E.R."/>
            <person name="Rappuoli R."/>
            <person name="Venter J.C."/>
        </authorList>
    </citation>
    <scope>NUCLEOTIDE SEQUENCE [LARGE SCALE GENOMIC DNA]</scope>
    <source>
        <strain>ATCC BAA-335 / MC58</strain>
    </source>
</reference>
<proteinExistence type="inferred from homology"/>
<accession>Q7DDT3</accession>
<name>RS17_NEIMB</name>